<organismHost>
    <name type="scientific">Equus caballus</name>
    <name type="common">Horse</name>
    <dbReference type="NCBI Taxonomy" id="9796"/>
</organismHost>
<feature type="signal peptide" evidence="1">
    <location>
        <begin position="1"/>
        <end position="19"/>
    </location>
</feature>
<feature type="chain" id="PRO_0000038290" description="Envelope glycoprotein G">
    <location>
        <begin position="20"/>
        <end position="411"/>
    </location>
</feature>
<feature type="transmembrane region" description="Helical" evidence="1">
    <location>
        <begin position="363"/>
        <end position="379"/>
    </location>
</feature>
<feature type="region of interest" description="Disordered" evidence="2">
    <location>
        <begin position="306"/>
        <end position="345"/>
    </location>
</feature>
<feature type="compositionally biased region" description="Polar residues" evidence="2">
    <location>
        <begin position="306"/>
        <end position="327"/>
    </location>
</feature>
<feature type="compositionally biased region" description="Polar residues" evidence="2">
    <location>
        <begin position="334"/>
        <end position="345"/>
    </location>
</feature>
<feature type="glycosylation site" description="N-linked (GlcNAc...) asparagine; by host" evidence="1">
    <location>
        <position position="83"/>
    </location>
</feature>
<feature type="glycosylation site" description="N-linked (GlcNAc...) asparagine; by host" evidence="1">
    <location>
        <position position="138"/>
    </location>
</feature>
<feature type="glycosylation site" description="N-linked (GlcNAc...) asparagine; by host" evidence="1">
    <location>
        <position position="222"/>
    </location>
</feature>
<feature type="glycosylation site" description="N-linked (GlcNAc...) asparagine; by host" evidence="1">
    <location>
        <position position="245"/>
    </location>
</feature>
<feature type="glycosylation site" description="N-linked (GlcNAc...) asparagine; by host" evidence="1">
    <location>
        <position position="317"/>
    </location>
</feature>
<feature type="glycosylation site" description="N-linked (GlcNAc...) asparagine; by host" evidence="1">
    <location>
        <position position="392"/>
    </location>
</feature>
<sequence>MLTVLAALSLLSLLTSATGRLAPDELCYAEPRRTGSPPNTQPERPPVIFEPPTIAIKAESKGCELILLDPPIDVSYRREDKVNASIAWFFDFGACRMPIAYREYYGCIGNAVPSPETCDAYSFTLIRTEGIVEFTIVNMSLLFQPGIYDSGNFIYSVLLDYHIFTGRVTLEVEKDTNYPCGMIHGLTAYGNINVDETMDNASPHPRAVGCFPEPIDNEAWANVTFTELGIPDPNSFLDDEGDYPNISDCHSWESYTYPNTLRQATGPQTLLVGAVGLRILAQAWKFVGDETYDTIRAEAKNLETHVPSSAAESSLENQSTQEESNSPEVAHLRSVNSDDSTHTGGASNGIQDCDSQLKTVYACLALIGLGTCAMIGLIVYICVLRSKLSSRNFSRAQNVKHRNYQRLEYVA</sequence>
<evidence type="ECO:0000255" key="1"/>
<evidence type="ECO:0000256" key="2">
    <source>
        <dbReference type="SAM" id="MobiDB-lite"/>
    </source>
</evidence>
<evidence type="ECO:0000269" key="3">
    <source>
    </source>
</evidence>
<evidence type="ECO:0000305" key="4"/>
<comment type="function">
    <text evidence="3">Chemokine-binding protein that inhibits neutrophils' chemotaxis.</text>
</comment>
<comment type="interaction">
    <interactant intactId="EBI-11701747">
        <id>P28967</id>
    </interactant>
    <interactant intactId="EBI-11701719">
        <id>O62812</id>
        <label>CXCL8</label>
    </interactant>
    <organismsDiffer>true</organismsDiffer>
    <experiments>3</experiments>
</comment>
<comment type="subcellular location">
    <subcellularLocation>
        <location evidence="4">Virion membrane</location>
        <topology evidence="4">Single-pass membrane protein</topology>
    </subcellularLocation>
</comment>
<comment type="similarity">
    <text evidence="4">Belongs to the alphaherpesvirinae glycoprotein G family.</text>
</comment>
<protein>
    <recommendedName>
        <fullName>Envelope glycoprotein G</fullName>
        <shortName>gG</shortName>
    </recommendedName>
</protein>
<accession>P28967</accession>
<accession>Q6S6W1</accession>
<dbReference type="EMBL" id="AY665713">
    <property type="protein sequence ID" value="AAT67327.1"/>
    <property type="molecule type" value="Genomic_DNA"/>
</dbReference>
<dbReference type="PIR" id="G36802">
    <property type="entry name" value="VGBEG2"/>
</dbReference>
<dbReference type="SMR" id="P28967"/>
<dbReference type="IntAct" id="P28967">
    <property type="interactions" value="1"/>
</dbReference>
<dbReference type="GlyCosmos" id="P28967">
    <property type="glycosylation" value="6 sites, No reported glycans"/>
</dbReference>
<dbReference type="KEGG" id="vg:2948582"/>
<dbReference type="Proteomes" id="UP000001189">
    <property type="component" value="Segment"/>
</dbReference>
<dbReference type="GO" id="GO:0016020">
    <property type="term" value="C:membrane"/>
    <property type="evidence" value="ECO:0007669"/>
    <property type="project" value="UniProtKB-KW"/>
</dbReference>
<dbReference type="GO" id="GO:0019031">
    <property type="term" value="C:viral envelope"/>
    <property type="evidence" value="ECO:0007669"/>
    <property type="project" value="UniProtKB-KW"/>
</dbReference>
<dbReference type="GO" id="GO:0055036">
    <property type="term" value="C:virion membrane"/>
    <property type="evidence" value="ECO:0007669"/>
    <property type="project" value="UniProtKB-SubCell"/>
</dbReference>
<dbReference type="GO" id="GO:0090022">
    <property type="term" value="P:regulation of neutrophil chemotaxis"/>
    <property type="evidence" value="ECO:0000315"/>
    <property type="project" value="AgBase"/>
</dbReference>
<dbReference type="Gene3D" id="2.70.230.10">
    <property type="match status" value="1"/>
</dbReference>
<dbReference type="InterPro" id="IPR002896">
    <property type="entry name" value="Herpes_glycop_dom"/>
</dbReference>
<dbReference type="InterPro" id="IPR036179">
    <property type="entry name" value="Ig-like_dom_sf"/>
</dbReference>
<dbReference type="Pfam" id="PF01537">
    <property type="entry name" value="Herpes_glycop_D"/>
    <property type="match status" value="1"/>
</dbReference>
<dbReference type="SUPFAM" id="SSF48726">
    <property type="entry name" value="Immunoglobulin"/>
    <property type="match status" value="1"/>
</dbReference>
<reference key="1">
    <citation type="journal article" date="1992" name="Virology">
        <title>The DNA sequence of equine herpesvirus-1.</title>
        <authorList>
            <person name="Telford E.A.R."/>
            <person name="Watson M.S."/>
            <person name="McBride K."/>
            <person name="Davison A.J."/>
        </authorList>
    </citation>
    <scope>NUCLEOTIDE SEQUENCE [LARGE SCALE GENOMIC DNA]</scope>
</reference>
<reference key="2">
    <citation type="journal article" date="2007" name="J. Immunol.">
        <title>Herpesvirus chemokine-binding glycoprotein G (gG) efficiently inhibits neutrophil chemotaxis in vitro and in vivo.</title>
        <authorList>
            <person name="Van de Walle G.R."/>
            <person name="May M.L."/>
            <person name="Sukhumavasi W."/>
            <person name="von Einem J."/>
            <person name="Osterrieder N."/>
        </authorList>
    </citation>
    <scope>FUNCTION</scope>
    <source>
        <strain>RacL11</strain>
    </source>
</reference>
<name>GG_EHV1B</name>
<gene>
    <name type="primary">gG</name>
    <name type="ordered locus">70</name>
</gene>
<proteinExistence type="evidence at protein level"/>
<keyword id="KW-0325">Glycoprotein</keyword>
<keyword id="KW-0472">Membrane</keyword>
<keyword id="KW-1185">Reference proteome</keyword>
<keyword id="KW-0732">Signal</keyword>
<keyword id="KW-0812">Transmembrane</keyword>
<keyword id="KW-1133">Transmembrane helix</keyword>
<keyword id="KW-0261">Viral envelope protein</keyword>
<keyword id="KW-0946">Virion</keyword>
<organism>
    <name type="scientific">Equine herpesvirus 1 (strain Ab4p)</name>
    <name type="common">EHV-1</name>
    <name type="synonym">Equine abortion virus</name>
    <dbReference type="NCBI Taxonomy" id="31520"/>
    <lineage>
        <taxon>Viruses</taxon>
        <taxon>Duplodnaviria</taxon>
        <taxon>Heunggongvirae</taxon>
        <taxon>Peploviricota</taxon>
        <taxon>Herviviricetes</taxon>
        <taxon>Herpesvirales</taxon>
        <taxon>Orthoherpesviridae</taxon>
        <taxon>Alphaherpesvirinae</taxon>
        <taxon>Varicellovirus</taxon>
        <taxon>Varicellovirus equidalpha1</taxon>
        <taxon>Equid alphaherpesvirus 1</taxon>
    </lineage>
</organism>